<name>HIS1_MARMM</name>
<organism>
    <name type="scientific">Maricaulis maris (strain MCS10)</name>
    <name type="common">Caulobacter maris</name>
    <dbReference type="NCBI Taxonomy" id="394221"/>
    <lineage>
        <taxon>Bacteria</taxon>
        <taxon>Pseudomonadati</taxon>
        <taxon>Pseudomonadota</taxon>
        <taxon>Alphaproteobacteria</taxon>
        <taxon>Maricaulales</taxon>
        <taxon>Maricaulaceae</taxon>
        <taxon>Maricaulis</taxon>
    </lineage>
</organism>
<reference key="1">
    <citation type="submission" date="2006-08" db="EMBL/GenBank/DDBJ databases">
        <title>Complete sequence of Maricaulis maris MCS10.</title>
        <authorList>
            <consortium name="US DOE Joint Genome Institute"/>
            <person name="Copeland A."/>
            <person name="Lucas S."/>
            <person name="Lapidus A."/>
            <person name="Barry K."/>
            <person name="Detter J.C."/>
            <person name="Glavina del Rio T."/>
            <person name="Hammon N."/>
            <person name="Israni S."/>
            <person name="Dalin E."/>
            <person name="Tice H."/>
            <person name="Pitluck S."/>
            <person name="Saunders E."/>
            <person name="Brettin T."/>
            <person name="Bruce D."/>
            <person name="Han C."/>
            <person name="Tapia R."/>
            <person name="Gilna P."/>
            <person name="Schmutz J."/>
            <person name="Larimer F."/>
            <person name="Land M."/>
            <person name="Hauser L."/>
            <person name="Kyrpides N."/>
            <person name="Mikhailova N."/>
            <person name="Viollier P."/>
            <person name="Stephens C."/>
            <person name="Richardson P."/>
        </authorList>
    </citation>
    <scope>NUCLEOTIDE SEQUENCE [LARGE SCALE GENOMIC DNA]</scope>
    <source>
        <strain>MCS10</strain>
    </source>
</reference>
<evidence type="ECO:0000255" key="1">
    <source>
        <dbReference type="HAMAP-Rule" id="MF_00079"/>
    </source>
</evidence>
<sequence length="294" mass="31555">MTSRLRIAVQSKGRLAEGGMDLLKRCGLRFAYGRDKLHQRAENMPVDLMLVRDDDIPNFVGSGACDYGIVGENVLAEEQAAGGRARELEVALRLGFAGCTLKLAAPDDGSIRTVADLEGKAVATSYPALTAQYIADRGVKAEIVEMRGSVEVAPRLRIADAICDLVSSGATLQANGLKAFETVLRSEAVLIRRKSGRADDTDAIANILMRRSEGVIASSQTKYIMLNAPTDRLGAIRALLPGADAPTIAKVAGREDVVAVHAVCRERVFWETLEALEKEGARAILVLPIEKMLA</sequence>
<dbReference type="EC" id="2.4.2.17" evidence="1"/>
<dbReference type="EMBL" id="CP000449">
    <property type="protein sequence ID" value="ABI65907.1"/>
    <property type="molecule type" value="Genomic_DNA"/>
</dbReference>
<dbReference type="RefSeq" id="WP_011643554.1">
    <property type="nucleotide sequence ID" value="NC_008347.1"/>
</dbReference>
<dbReference type="SMR" id="Q0AP80"/>
<dbReference type="STRING" id="394221.Mmar10_1615"/>
<dbReference type="KEGG" id="mmr:Mmar10_1615"/>
<dbReference type="eggNOG" id="COG0040">
    <property type="taxonomic scope" value="Bacteria"/>
</dbReference>
<dbReference type="HOGENOM" id="CLU_038115_1_0_5"/>
<dbReference type="OrthoDB" id="9806435at2"/>
<dbReference type="UniPathway" id="UPA00031">
    <property type="reaction ID" value="UER00006"/>
</dbReference>
<dbReference type="Proteomes" id="UP000001964">
    <property type="component" value="Chromosome"/>
</dbReference>
<dbReference type="GO" id="GO:0005737">
    <property type="term" value="C:cytoplasm"/>
    <property type="evidence" value="ECO:0007669"/>
    <property type="project" value="UniProtKB-SubCell"/>
</dbReference>
<dbReference type="GO" id="GO:0005524">
    <property type="term" value="F:ATP binding"/>
    <property type="evidence" value="ECO:0007669"/>
    <property type="project" value="UniProtKB-KW"/>
</dbReference>
<dbReference type="GO" id="GO:0003879">
    <property type="term" value="F:ATP phosphoribosyltransferase activity"/>
    <property type="evidence" value="ECO:0007669"/>
    <property type="project" value="UniProtKB-UniRule"/>
</dbReference>
<dbReference type="GO" id="GO:0000287">
    <property type="term" value="F:magnesium ion binding"/>
    <property type="evidence" value="ECO:0007669"/>
    <property type="project" value="UniProtKB-UniRule"/>
</dbReference>
<dbReference type="GO" id="GO:0000105">
    <property type="term" value="P:L-histidine biosynthetic process"/>
    <property type="evidence" value="ECO:0007669"/>
    <property type="project" value="UniProtKB-UniRule"/>
</dbReference>
<dbReference type="CDD" id="cd13592">
    <property type="entry name" value="PBP2_HisGL2"/>
    <property type="match status" value="1"/>
</dbReference>
<dbReference type="FunFam" id="3.30.70.120:FF:000002">
    <property type="entry name" value="ATP phosphoribosyltransferase"/>
    <property type="match status" value="1"/>
</dbReference>
<dbReference type="FunFam" id="3.40.190.10:FF:000008">
    <property type="entry name" value="ATP phosphoribosyltransferase"/>
    <property type="match status" value="1"/>
</dbReference>
<dbReference type="Gene3D" id="3.30.70.120">
    <property type="match status" value="1"/>
</dbReference>
<dbReference type="Gene3D" id="3.40.190.10">
    <property type="entry name" value="Periplasmic binding protein-like II"/>
    <property type="match status" value="2"/>
</dbReference>
<dbReference type="HAMAP" id="MF_00079">
    <property type="entry name" value="HisG_Long"/>
    <property type="match status" value="1"/>
</dbReference>
<dbReference type="InterPro" id="IPR020621">
    <property type="entry name" value="ATP-PRT_HisG_long"/>
</dbReference>
<dbReference type="InterPro" id="IPR013820">
    <property type="entry name" value="ATP_PRibTrfase_cat"/>
</dbReference>
<dbReference type="InterPro" id="IPR001348">
    <property type="entry name" value="ATP_PRibTrfase_HisG"/>
</dbReference>
<dbReference type="InterPro" id="IPR013115">
    <property type="entry name" value="HisG_C"/>
</dbReference>
<dbReference type="InterPro" id="IPR011322">
    <property type="entry name" value="N-reg_PII-like_a/b"/>
</dbReference>
<dbReference type="InterPro" id="IPR015867">
    <property type="entry name" value="N-reg_PII/ATP_PRibTrfase_C"/>
</dbReference>
<dbReference type="NCBIfam" id="TIGR00070">
    <property type="entry name" value="hisG"/>
    <property type="match status" value="1"/>
</dbReference>
<dbReference type="NCBIfam" id="TIGR03455">
    <property type="entry name" value="HisG_C-term"/>
    <property type="match status" value="1"/>
</dbReference>
<dbReference type="PANTHER" id="PTHR21403:SF8">
    <property type="entry name" value="ATP PHOSPHORIBOSYLTRANSFERASE"/>
    <property type="match status" value="1"/>
</dbReference>
<dbReference type="PANTHER" id="PTHR21403">
    <property type="entry name" value="ATP PHOSPHORIBOSYLTRANSFERASE ATP-PRTASE"/>
    <property type="match status" value="1"/>
</dbReference>
<dbReference type="Pfam" id="PF01634">
    <property type="entry name" value="HisG"/>
    <property type="match status" value="1"/>
</dbReference>
<dbReference type="Pfam" id="PF08029">
    <property type="entry name" value="HisG_C"/>
    <property type="match status" value="1"/>
</dbReference>
<dbReference type="SUPFAM" id="SSF54913">
    <property type="entry name" value="GlnB-like"/>
    <property type="match status" value="1"/>
</dbReference>
<dbReference type="SUPFAM" id="SSF53850">
    <property type="entry name" value="Periplasmic binding protein-like II"/>
    <property type="match status" value="1"/>
</dbReference>
<accession>Q0AP80</accession>
<protein>
    <recommendedName>
        <fullName evidence="1">ATP phosphoribosyltransferase</fullName>
        <shortName evidence="1">ATP-PRT</shortName>
        <shortName evidence="1">ATP-PRTase</shortName>
        <ecNumber evidence="1">2.4.2.17</ecNumber>
    </recommendedName>
</protein>
<feature type="chain" id="PRO_1000117094" description="ATP phosphoribosyltransferase">
    <location>
        <begin position="1"/>
        <end position="294"/>
    </location>
</feature>
<gene>
    <name evidence="1" type="primary">hisG</name>
    <name type="ordered locus">Mmar10_1615</name>
</gene>
<proteinExistence type="inferred from homology"/>
<comment type="function">
    <text evidence="1">Catalyzes the condensation of ATP and 5-phosphoribose 1-diphosphate to form N'-(5'-phosphoribosyl)-ATP (PR-ATP). Has a crucial role in the pathway because the rate of histidine biosynthesis seems to be controlled primarily by regulation of HisG enzymatic activity.</text>
</comment>
<comment type="catalytic activity">
    <reaction evidence="1">
        <text>1-(5-phospho-beta-D-ribosyl)-ATP + diphosphate = 5-phospho-alpha-D-ribose 1-diphosphate + ATP</text>
        <dbReference type="Rhea" id="RHEA:18473"/>
        <dbReference type="ChEBI" id="CHEBI:30616"/>
        <dbReference type="ChEBI" id="CHEBI:33019"/>
        <dbReference type="ChEBI" id="CHEBI:58017"/>
        <dbReference type="ChEBI" id="CHEBI:73183"/>
        <dbReference type="EC" id="2.4.2.17"/>
    </reaction>
</comment>
<comment type="cofactor">
    <cofactor evidence="1">
        <name>Mg(2+)</name>
        <dbReference type="ChEBI" id="CHEBI:18420"/>
    </cofactor>
</comment>
<comment type="activity regulation">
    <text evidence="1">Feedback inhibited by histidine.</text>
</comment>
<comment type="pathway">
    <text evidence="1">Amino-acid biosynthesis; L-histidine biosynthesis; L-histidine from 5-phospho-alpha-D-ribose 1-diphosphate: step 1/9.</text>
</comment>
<comment type="subcellular location">
    <subcellularLocation>
        <location evidence="1">Cytoplasm</location>
    </subcellularLocation>
</comment>
<comment type="similarity">
    <text evidence="1">Belongs to the ATP phosphoribosyltransferase family. Long subfamily.</text>
</comment>
<keyword id="KW-0028">Amino-acid biosynthesis</keyword>
<keyword id="KW-0067">ATP-binding</keyword>
<keyword id="KW-0963">Cytoplasm</keyword>
<keyword id="KW-0328">Glycosyltransferase</keyword>
<keyword id="KW-0368">Histidine biosynthesis</keyword>
<keyword id="KW-0460">Magnesium</keyword>
<keyword id="KW-0479">Metal-binding</keyword>
<keyword id="KW-0547">Nucleotide-binding</keyword>
<keyword id="KW-1185">Reference proteome</keyword>
<keyword id="KW-0808">Transferase</keyword>